<proteinExistence type="inferred from homology"/>
<name>SSUB_ECOUT</name>
<feature type="chain" id="PRO_0000279912" description="Aliphatic sulfonates import ATP-binding protein SsuB">
    <location>
        <begin position="1"/>
        <end position="255"/>
    </location>
</feature>
<feature type="domain" description="ABC transporter" evidence="1">
    <location>
        <begin position="12"/>
        <end position="233"/>
    </location>
</feature>
<feature type="binding site" evidence="1">
    <location>
        <begin position="44"/>
        <end position="51"/>
    </location>
    <ligand>
        <name>ATP</name>
        <dbReference type="ChEBI" id="CHEBI:30616"/>
    </ligand>
</feature>
<comment type="function">
    <text evidence="1">Part of the ABC transporter complex SsuABC involved in aliphatic sulfonates import. Responsible for energy coupling to the transport system.</text>
</comment>
<comment type="catalytic activity">
    <reaction evidence="1">
        <text>ATP + H2O + aliphatic sulfonate-[sulfonate-binding protein]Side 1 = ADP + phosphate + aliphatic sulfonateSide 2 + [sulfonate-binding protein]Side 1.</text>
        <dbReference type="EC" id="7.6.2.14"/>
    </reaction>
</comment>
<comment type="subunit">
    <text evidence="1">The complex is composed of two ATP-binding proteins (SsuB), two transmembrane proteins (SsuC) and a solute-binding protein (SsuA).</text>
</comment>
<comment type="subcellular location">
    <subcellularLocation>
        <location evidence="1">Cell inner membrane</location>
        <topology evidence="1">Peripheral membrane protein</topology>
    </subcellularLocation>
</comment>
<comment type="similarity">
    <text evidence="1">Belongs to the ABC transporter superfamily. Aliphatic sulfonates importer (TC 3.A.1.17.2) family.</text>
</comment>
<evidence type="ECO:0000255" key="1">
    <source>
        <dbReference type="HAMAP-Rule" id="MF_01724"/>
    </source>
</evidence>
<sequence>MNTARLNQGTPLLLNAVSKHYAENIVLNQLDLHIPAGQFVAVVGRSGGGKSTLLRLLAGLETPTAGDVLAGTTPLAEIQDDTRMMFQDARLLPWKSVIDNVGLGLKGQWRDAARQALAAVGLENRAGEWPAALSGGQKQRVALARALIHRPGLLLLDEPLGALDALTRLEMQDLIVSLWQEHGFTVLLVTHDVSEAVAMADRVLLIEEGKIGLDLTVDIPRPRRLGSVRLAELEAEVLQRVMQRGHSEQPIRRHG</sequence>
<protein>
    <recommendedName>
        <fullName evidence="1">Aliphatic sulfonates import ATP-binding protein SsuB</fullName>
        <ecNumber evidence="1">7.6.2.14</ecNumber>
    </recommendedName>
</protein>
<dbReference type="EC" id="7.6.2.14" evidence="1"/>
<dbReference type="EMBL" id="CP000243">
    <property type="protein sequence ID" value="ABE06490.1"/>
    <property type="molecule type" value="Genomic_DNA"/>
</dbReference>
<dbReference type="RefSeq" id="WP_001090487.1">
    <property type="nucleotide sequence ID" value="NZ_CP064825.1"/>
</dbReference>
<dbReference type="SMR" id="Q1RDS4"/>
<dbReference type="KEGG" id="eci:UTI89_C1005"/>
<dbReference type="HOGENOM" id="CLU_000604_1_22_6"/>
<dbReference type="Proteomes" id="UP000001952">
    <property type="component" value="Chromosome"/>
</dbReference>
<dbReference type="GO" id="GO:0005886">
    <property type="term" value="C:plasma membrane"/>
    <property type="evidence" value="ECO:0007669"/>
    <property type="project" value="UniProtKB-SubCell"/>
</dbReference>
<dbReference type="GO" id="GO:0005524">
    <property type="term" value="F:ATP binding"/>
    <property type="evidence" value="ECO:0007669"/>
    <property type="project" value="UniProtKB-KW"/>
</dbReference>
<dbReference type="GO" id="GO:0016887">
    <property type="term" value="F:ATP hydrolysis activity"/>
    <property type="evidence" value="ECO:0007669"/>
    <property type="project" value="InterPro"/>
</dbReference>
<dbReference type="CDD" id="cd03293">
    <property type="entry name" value="ABC_NrtD_SsuB_transporters"/>
    <property type="match status" value="1"/>
</dbReference>
<dbReference type="FunFam" id="3.40.50.300:FF:000653">
    <property type="entry name" value="Aliphatic sulfonates import ATP-binding protein SsuB"/>
    <property type="match status" value="1"/>
</dbReference>
<dbReference type="Gene3D" id="3.40.50.300">
    <property type="entry name" value="P-loop containing nucleotide triphosphate hydrolases"/>
    <property type="match status" value="1"/>
</dbReference>
<dbReference type="InterPro" id="IPR003593">
    <property type="entry name" value="AAA+_ATPase"/>
</dbReference>
<dbReference type="InterPro" id="IPR003439">
    <property type="entry name" value="ABC_transporter-like_ATP-bd"/>
</dbReference>
<dbReference type="InterPro" id="IPR017871">
    <property type="entry name" value="ABC_transporter-like_CS"/>
</dbReference>
<dbReference type="InterPro" id="IPR050166">
    <property type="entry name" value="ABC_transporter_ATP-bind"/>
</dbReference>
<dbReference type="InterPro" id="IPR027417">
    <property type="entry name" value="P-loop_NTPase"/>
</dbReference>
<dbReference type="NCBIfam" id="NF008420">
    <property type="entry name" value="PRK11247.1"/>
    <property type="match status" value="1"/>
</dbReference>
<dbReference type="PANTHER" id="PTHR42788:SF17">
    <property type="entry name" value="ALIPHATIC SULFONATES IMPORT ATP-BINDING PROTEIN SSUB"/>
    <property type="match status" value="1"/>
</dbReference>
<dbReference type="PANTHER" id="PTHR42788">
    <property type="entry name" value="TAURINE IMPORT ATP-BINDING PROTEIN-RELATED"/>
    <property type="match status" value="1"/>
</dbReference>
<dbReference type="Pfam" id="PF00005">
    <property type="entry name" value="ABC_tran"/>
    <property type="match status" value="1"/>
</dbReference>
<dbReference type="SMART" id="SM00382">
    <property type="entry name" value="AAA"/>
    <property type="match status" value="1"/>
</dbReference>
<dbReference type="SUPFAM" id="SSF52540">
    <property type="entry name" value="P-loop containing nucleoside triphosphate hydrolases"/>
    <property type="match status" value="1"/>
</dbReference>
<dbReference type="PROSITE" id="PS00211">
    <property type="entry name" value="ABC_TRANSPORTER_1"/>
    <property type="match status" value="1"/>
</dbReference>
<dbReference type="PROSITE" id="PS50893">
    <property type="entry name" value="ABC_TRANSPORTER_2"/>
    <property type="match status" value="1"/>
</dbReference>
<dbReference type="PROSITE" id="PS51291">
    <property type="entry name" value="SSUB"/>
    <property type="match status" value="1"/>
</dbReference>
<reference key="1">
    <citation type="journal article" date="2006" name="Proc. Natl. Acad. Sci. U.S.A.">
        <title>Identification of genes subject to positive selection in uropathogenic strains of Escherichia coli: a comparative genomics approach.</title>
        <authorList>
            <person name="Chen S.L."/>
            <person name="Hung C.-S."/>
            <person name="Xu J."/>
            <person name="Reigstad C.S."/>
            <person name="Magrini V."/>
            <person name="Sabo A."/>
            <person name="Blasiar D."/>
            <person name="Bieri T."/>
            <person name="Meyer R.R."/>
            <person name="Ozersky P."/>
            <person name="Armstrong J.R."/>
            <person name="Fulton R.S."/>
            <person name="Latreille J.P."/>
            <person name="Spieth J."/>
            <person name="Hooton T.M."/>
            <person name="Mardis E.R."/>
            <person name="Hultgren S.J."/>
            <person name="Gordon J.I."/>
        </authorList>
    </citation>
    <scope>NUCLEOTIDE SEQUENCE [LARGE SCALE GENOMIC DNA]</scope>
    <source>
        <strain>UTI89 / UPEC</strain>
    </source>
</reference>
<organism>
    <name type="scientific">Escherichia coli (strain UTI89 / UPEC)</name>
    <dbReference type="NCBI Taxonomy" id="364106"/>
    <lineage>
        <taxon>Bacteria</taxon>
        <taxon>Pseudomonadati</taxon>
        <taxon>Pseudomonadota</taxon>
        <taxon>Gammaproteobacteria</taxon>
        <taxon>Enterobacterales</taxon>
        <taxon>Enterobacteriaceae</taxon>
        <taxon>Escherichia</taxon>
    </lineage>
</organism>
<keyword id="KW-0067">ATP-binding</keyword>
<keyword id="KW-0997">Cell inner membrane</keyword>
<keyword id="KW-1003">Cell membrane</keyword>
<keyword id="KW-0472">Membrane</keyword>
<keyword id="KW-0547">Nucleotide-binding</keyword>
<keyword id="KW-1278">Translocase</keyword>
<keyword id="KW-0813">Transport</keyword>
<accession>Q1RDS4</accession>
<gene>
    <name evidence="1" type="primary">ssuB</name>
    <name type="ordered locus">UTI89_C1005</name>
</gene>